<protein>
    <recommendedName>
        <fullName evidence="1">Large ribosomal subunit protein uL29</fullName>
    </recommendedName>
    <alternativeName>
        <fullName evidence="2">50S ribosomal protein L29</fullName>
    </alternativeName>
</protein>
<sequence length="66" mass="7697">MKYTELKDKSIKELEELLHAKKAELFELRVKLKAMQLSNPNEIKKARRNIARIKTAINAHYSSSVE</sequence>
<comment type="similarity">
    <text evidence="1">Belongs to the universal ribosomal protein uL29 family.</text>
</comment>
<dbReference type="EMBL" id="CP001217">
    <property type="protein sequence ID" value="ACJ08427.1"/>
    <property type="molecule type" value="Genomic_DNA"/>
</dbReference>
<dbReference type="SMR" id="B6JNE9"/>
<dbReference type="KEGG" id="hpp:HPP12_1275"/>
<dbReference type="HOGENOM" id="CLU_158491_7_1_7"/>
<dbReference type="Proteomes" id="UP000008198">
    <property type="component" value="Chromosome"/>
</dbReference>
<dbReference type="GO" id="GO:0022625">
    <property type="term" value="C:cytosolic large ribosomal subunit"/>
    <property type="evidence" value="ECO:0007669"/>
    <property type="project" value="TreeGrafter"/>
</dbReference>
<dbReference type="GO" id="GO:0003735">
    <property type="term" value="F:structural constituent of ribosome"/>
    <property type="evidence" value="ECO:0007669"/>
    <property type="project" value="InterPro"/>
</dbReference>
<dbReference type="GO" id="GO:0006412">
    <property type="term" value="P:translation"/>
    <property type="evidence" value="ECO:0007669"/>
    <property type="project" value="UniProtKB-UniRule"/>
</dbReference>
<dbReference type="CDD" id="cd00427">
    <property type="entry name" value="Ribosomal_L29_HIP"/>
    <property type="match status" value="1"/>
</dbReference>
<dbReference type="Gene3D" id="1.10.287.310">
    <property type="match status" value="1"/>
</dbReference>
<dbReference type="HAMAP" id="MF_00374">
    <property type="entry name" value="Ribosomal_uL29"/>
    <property type="match status" value="1"/>
</dbReference>
<dbReference type="InterPro" id="IPR050063">
    <property type="entry name" value="Ribosomal_protein_uL29"/>
</dbReference>
<dbReference type="InterPro" id="IPR001854">
    <property type="entry name" value="Ribosomal_uL29"/>
</dbReference>
<dbReference type="InterPro" id="IPR018254">
    <property type="entry name" value="Ribosomal_uL29_CS"/>
</dbReference>
<dbReference type="InterPro" id="IPR036049">
    <property type="entry name" value="Ribosomal_uL29_sf"/>
</dbReference>
<dbReference type="NCBIfam" id="TIGR00012">
    <property type="entry name" value="L29"/>
    <property type="match status" value="1"/>
</dbReference>
<dbReference type="PANTHER" id="PTHR10916">
    <property type="entry name" value="60S RIBOSOMAL PROTEIN L35/50S RIBOSOMAL PROTEIN L29"/>
    <property type="match status" value="1"/>
</dbReference>
<dbReference type="PANTHER" id="PTHR10916:SF0">
    <property type="entry name" value="LARGE RIBOSOMAL SUBUNIT PROTEIN UL29C"/>
    <property type="match status" value="1"/>
</dbReference>
<dbReference type="Pfam" id="PF00831">
    <property type="entry name" value="Ribosomal_L29"/>
    <property type="match status" value="1"/>
</dbReference>
<dbReference type="SUPFAM" id="SSF46561">
    <property type="entry name" value="Ribosomal protein L29 (L29p)"/>
    <property type="match status" value="1"/>
</dbReference>
<dbReference type="PROSITE" id="PS00579">
    <property type="entry name" value="RIBOSOMAL_L29"/>
    <property type="match status" value="1"/>
</dbReference>
<proteinExistence type="inferred from homology"/>
<keyword id="KW-0687">Ribonucleoprotein</keyword>
<keyword id="KW-0689">Ribosomal protein</keyword>
<feature type="chain" id="PRO_1000121778" description="Large ribosomal subunit protein uL29">
    <location>
        <begin position="1"/>
        <end position="66"/>
    </location>
</feature>
<evidence type="ECO:0000255" key="1">
    <source>
        <dbReference type="HAMAP-Rule" id="MF_00374"/>
    </source>
</evidence>
<evidence type="ECO:0000305" key="2"/>
<reference key="1">
    <citation type="submission" date="2008-10" db="EMBL/GenBank/DDBJ databases">
        <title>The complete genome sequence of Helicobacter pylori strain P12.</title>
        <authorList>
            <person name="Fischer W."/>
            <person name="Windhager L."/>
            <person name="Karnholz A."/>
            <person name="Zeiller M."/>
            <person name="Zimmer R."/>
            <person name="Haas R."/>
        </authorList>
    </citation>
    <scope>NUCLEOTIDE SEQUENCE [LARGE SCALE GENOMIC DNA]</scope>
    <source>
        <strain>P12</strain>
    </source>
</reference>
<name>RL29_HELP2</name>
<accession>B6JNE9</accession>
<gene>
    <name evidence="1" type="primary">rpmC</name>
    <name type="ordered locus">HPP12_1275</name>
</gene>
<organism>
    <name type="scientific">Helicobacter pylori (strain P12)</name>
    <dbReference type="NCBI Taxonomy" id="570508"/>
    <lineage>
        <taxon>Bacteria</taxon>
        <taxon>Pseudomonadati</taxon>
        <taxon>Campylobacterota</taxon>
        <taxon>Epsilonproteobacteria</taxon>
        <taxon>Campylobacterales</taxon>
        <taxon>Helicobacteraceae</taxon>
        <taxon>Helicobacter</taxon>
    </lineage>
</organism>